<gene>
    <name evidence="3" type="primary">arcS</name>
    <name type="ordered locus">MJ1022</name>
</gene>
<accession>Q58428</accession>
<proteinExistence type="evidence at protein level"/>
<keyword id="KW-1185">Reference proteome</keyword>
<keyword id="KW-0808">Transferase</keyword>
<keyword id="KW-0819">tRNA processing</keyword>
<evidence type="ECO:0000255" key="1">
    <source>
        <dbReference type="PROSITE-ProRule" id="PRU00161"/>
    </source>
</evidence>
<evidence type="ECO:0000269" key="2">
    <source>
    </source>
</evidence>
<evidence type="ECO:0000303" key="3">
    <source>
    </source>
</evidence>
<evidence type="ECO:0000305" key="4"/>
<evidence type="ECO:0000305" key="5">
    <source>
    </source>
</evidence>
<reference key="1">
    <citation type="journal article" date="1996" name="Science">
        <title>Complete genome sequence of the methanogenic archaeon, Methanococcus jannaschii.</title>
        <authorList>
            <person name="Bult C.J."/>
            <person name="White O."/>
            <person name="Olsen G.J."/>
            <person name="Zhou L."/>
            <person name="Fleischmann R.D."/>
            <person name="Sutton G.G."/>
            <person name="Blake J.A."/>
            <person name="FitzGerald L.M."/>
            <person name="Clayton R.A."/>
            <person name="Gocayne J.D."/>
            <person name="Kerlavage A.R."/>
            <person name="Dougherty B.A."/>
            <person name="Tomb J.-F."/>
            <person name="Adams M.D."/>
            <person name="Reich C.I."/>
            <person name="Overbeek R."/>
            <person name="Kirkness E.F."/>
            <person name="Weinstock K.G."/>
            <person name="Merrick J.M."/>
            <person name="Glodek A."/>
            <person name="Scott J.L."/>
            <person name="Geoghagen N.S.M."/>
            <person name="Weidman J.F."/>
            <person name="Fuhrmann J.L."/>
            <person name="Nguyen D."/>
            <person name="Utterback T.R."/>
            <person name="Kelley J.M."/>
            <person name="Peterson J.D."/>
            <person name="Sadow P.W."/>
            <person name="Hanna M.C."/>
            <person name="Cotton M.D."/>
            <person name="Roberts K.M."/>
            <person name="Hurst M.A."/>
            <person name="Kaine B.P."/>
            <person name="Borodovsky M."/>
            <person name="Klenk H.-P."/>
            <person name="Fraser C.M."/>
            <person name="Smith H.O."/>
            <person name="Woese C.R."/>
            <person name="Venter J.C."/>
        </authorList>
    </citation>
    <scope>NUCLEOTIDE SEQUENCE [LARGE SCALE GENOMIC DNA]</scope>
    <source>
        <strain>ATCC 43067 / DSM 2661 / JAL-1 / JCM 10045 / NBRC 100440</strain>
    </source>
</reference>
<reference key="2">
    <citation type="journal article" date="2010" name="J. Biol. Chem.">
        <title>Discovery and characterization of an amidinotransferase involved in the modification of archaeal tRNA.</title>
        <authorList>
            <person name="Phillips G."/>
            <person name="Chikwana V.M."/>
            <person name="Maxwell A."/>
            <person name="El-Yacoubi B."/>
            <person name="Swairjo M.A."/>
            <person name="Iwata-Reuyl D."/>
            <person name="de Crecy-Lagard V."/>
        </authorList>
    </citation>
    <scope>FUNCTION</scope>
    <scope>CATALYTIC ACTIVITY</scope>
    <scope>BIOPHYSICOCHEMICAL PROPERTIES</scope>
    <scope>SUBUNIT</scope>
    <scope>SUBSTRATE SPECIFICITY</scope>
    <scope>PATHWAY</scope>
</reference>
<comment type="function">
    <text evidence="2">Is responsible for the final step in the biosynthesis of archaeosine, a modified nucleoside present in the dihydrouridine loop (D-loop) of archaeal tRNA. Catalyzes the conversion of 7-cyano-7-deazaguanine (preQ0)-modified tRNA to archaeosine-tRNA, transforming a nitrile group to a formamidine group. Can use either glutamine, asparagine or ammonium as amino donor.</text>
</comment>
<comment type="catalytic activity">
    <reaction evidence="2">
        <text>7-cyano-7-carbaguanosine(15) in tRNA + L-glutamine + H2O = archaeosine(15) in tRNA + L-glutamate</text>
        <dbReference type="Rhea" id="RHEA:54084"/>
        <dbReference type="Rhea" id="RHEA-COMP:10371"/>
        <dbReference type="Rhea" id="RHEA-COMP:14170"/>
        <dbReference type="ChEBI" id="CHEBI:15377"/>
        <dbReference type="ChEBI" id="CHEBI:29985"/>
        <dbReference type="ChEBI" id="CHEBI:58359"/>
        <dbReference type="ChEBI" id="CHEBI:82850"/>
        <dbReference type="ChEBI" id="CHEBI:138803"/>
        <dbReference type="EC" id="2.6.1.97"/>
    </reaction>
</comment>
<comment type="biophysicochemical properties">
    <temperatureDependence>
        <text evidence="2">Optimum temperature is around 40 degrees Celsius. Activity decreases significantly at temperatures above 45 degrees Celsius.</text>
    </temperatureDependence>
</comment>
<comment type="pathway">
    <text evidence="5">tRNA modification; archaeosine-tRNA biosynthesis.</text>
</comment>
<comment type="subunit">
    <text evidence="2">Homodimer.</text>
</comment>
<comment type="similarity">
    <text evidence="4">Belongs to the archaeosine synthase type 1 family.</text>
</comment>
<name>ARCS_METJA</name>
<dbReference type="EC" id="2.6.1.97" evidence="2"/>
<dbReference type="EMBL" id="L77117">
    <property type="protein sequence ID" value="AAB99026.1"/>
    <property type="molecule type" value="Genomic_DNA"/>
</dbReference>
<dbReference type="PIR" id="E64427">
    <property type="entry name" value="E64427"/>
</dbReference>
<dbReference type="RefSeq" id="WP_010870535.1">
    <property type="nucleotide sequence ID" value="NC_000909.1"/>
</dbReference>
<dbReference type="SMR" id="Q58428"/>
<dbReference type="FunCoup" id="Q58428">
    <property type="interactions" value="6"/>
</dbReference>
<dbReference type="STRING" id="243232.MJ_1022"/>
<dbReference type="PaxDb" id="243232-MJ_1022"/>
<dbReference type="EnsemblBacteria" id="AAB99026">
    <property type="protein sequence ID" value="AAB99026"/>
    <property type="gene ID" value="MJ_1022"/>
</dbReference>
<dbReference type="GeneID" id="1451919"/>
<dbReference type="KEGG" id="mja:MJ_1022"/>
<dbReference type="eggNOG" id="arCOG00990">
    <property type="taxonomic scope" value="Archaea"/>
</dbReference>
<dbReference type="HOGENOM" id="CLU_029831_0_0_2"/>
<dbReference type="InParanoid" id="Q58428"/>
<dbReference type="OrthoDB" id="115061at2157"/>
<dbReference type="PhylomeDB" id="Q58428"/>
<dbReference type="BioCyc" id="MetaCyc:MONOMER-16209"/>
<dbReference type="BRENDA" id="2.6.1.97">
    <property type="organism ID" value="3260"/>
</dbReference>
<dbReference type="UniPathway" id="UPA00393"/>
<dbReference type="Proteomes" id="UP000000805">
    <property type="component" value="Chromosome"/>
</dbReference>
<dbReference type="GO" id="GO:0005737">
    <property type="term" value="C:cytoplasm"/>
    <property type="evidence" value="ECO:0000318"/>
    <property type="project" value="GO_Central"/>
</dbReference>
<dbReference type="GO" id="GO:0002948">
    <property type="term" value="F:archaeosine synthase activity"/>
    <property type="evidence" value="ECO:0007669"/>
    <property type="project" value="UniProtKB-EC"/>
</dbReference>
<dbReference type="GO" id="GO:0003723">
    <property type="term" value="F:RNA binding"/>
    <property type="evidence" value="ECO:0007669"/>
    <property type="project" value="InterPro"/>
</dbReference>
<dbReference type="GO" id="GO:0002927">
    <property type="term" value="P:archaeosine-tRNA biosynthetic process"/>
    <property type="evidence" value="ECO:0000314"/>
    <property type="project" value="UniProtKB"/>
</dbReference>
<dbReference type="GO" id="GO:0006400">
    <property type="term" value="P:tRNA modification"/>
    <property type="evidence" value="ECO:0000314"/>
    <property type="project" value="UniProtKB"/>
</dbReference>
<dbReference type="GO" id="GO:0002099">
    <property type="term" value="P:tRNA wobble guanine modification"/>
    <property type="evidence" value="ECO:0000318"/>
    <property type="project" value="GO_Central"/>
</dbReference>
<dbReference type="CDD" id="cd21149">
    <property type="entry name" value="PUA_archaeosine_TGT"/>
    <property type="match status" value="1"/>
</dbReference>
<dbReference type="Gene3D" id="2.30.130.10">
    <property type="entry name" value="PUA domain"/>
    <property type="match status" value="1"/>
</dbReference>
<dbReference type="Gene3D" id="3.40.50.10630">
    <property type="entry name" value="Uracil-DNA glycosylase-like"/>
    <property type="match status" value="1"/>
</dbReference>
<dbReference type="InterPro" id="IPR053418">
    <property type="entry name" value="Archaeosine_synthase_1"/>
</dbReference>
<dbReference type="InterPro" id="IPR050076">
    <property type="entry name" value="ArchSynthase1/Queuine_TRR"/>
</dbReference>
<dbReference type="InterPro" id="IPR040777">
    <property type="entry name" value="DUF5591"/>
</dbReference>
<dbReference type="InterPro" id="IPR002478">
    <property type="entry name" value="PUA"/>
</dbReference>
<dbReference type="InterPro" id="IPR015947">
    <property type="entry name" value="PUA-like_sf"/>
</dbReference>
<dbReference type="InterPro" id="IPR036974">
    <property type="entry name" value="PUA_sf"/>
</dbReference>
<dbReference type="InterPro" id="IPR036511">
    <property type="entry name" value="TGT-like_sf"/>
</dbReference>
<dbReference type="InterPro" id="IPR004521">
    <property type="entry name" value="Uncharacterised_CHP00451"/>
</dbReference>
<dbReference type="InterPro" id="IPR036895">
    <property type="entry name" value="Uracil-DNA_glycosylase-like_sf"/>
</dbReference>
<dbReference type="NCBIfam" id="NF040592">
    <property type="entry name" value="tRNA_mod_ArcS"/>
    <property type="match status" value="1"/>
</dbReference>
<dbReference type="NCBIfam" id="TIGR00451">
    <property type="entry name" value="unchar_dom_2"/>
    <property type="match status" value="1"/>
</dbReference>
<dbReference type="PANTHER" id="PTHR46499:SF2">
    <property type="entry name" value="ARCHAEOSINE SYNTHASE"/>
    <property type="match status" value="1"/>
</dbReference>
<dbReference type="PANTHER" id="PTHR46499">
    <property type="entry name" value="QUEUINE TRNA-RIBOSYLTRANSFERASE"/>
    <property type="match status" value="1"/>
</dbReference>
<dbReference type="Pfam" id="PF17884">
    <property type="entry name" value="DUF5591"/>
    <property type="match status" value="1"/>
</dbReference>
<dbReference type="Pfam" id="PF01472">
    <property type="entry name" value="PUA"/>
    <property type="match status" value="1"/>
</dbReference>
<dbReference type="SMART" id="SM00359">
    <property type="entry name" value="PUA"/>
    <property type="match status" value="1"/>
</dbReference>
<dbReference type="SUPFAM" id="SSF88802">
    <property type="entry name" value="Pre-PUA domain"/>
    <property type="match status" value="1"/>
</dbReference>
<dbReference type="SUPFAM" id="SSF88697">
    <property type="entry name" value="PUA domain-like"/>
    <property type="match status" value="1"/>
</dbReference>
<dbReference type="SUPFAM" id="SSF51713">
    <property type="entry name" value="tRNA-guanine transglycosylase"/>
    <property type="match status" value="1"/>
</dbReference>
<dbReference type="SUPFAM" id="SSF52141">
    <property type="entry name" value="Uracil-DNA glycosylase-like"/>
    <property type="match status" value="1"/>
</dbReference>
<dbReference type="PROSITE" id="PS50890">
    <property type="entry name" value="PUA"/>
    <property type="match status" value="1"/>
</dbReference>
<sequence length="569" mass="65582">MLEPIAYDIGRLCKEEDKELTPKLIDIDVIGLSQEKIFYGIMTPFRCPNSKSIYELRKSYVKADGIKMPFDTFRELTSIFKKSFIGTVKYKGNVFKYQILNFGKHVDLIELEDADLYIIADGRRLIERKELQIIPKIREKISPNSAIYSPAVFPWEIPLLAYIGVDYFDDSLAKLYASMGYKFTKNRAVKVDSFSFEELYNNNKKVYEEILEEVRIAIKNGFLRNVVEETAVSHPYLWANYRRYEPDLRNIPLSKENKIIVTTNINIPEVKKYLERLDNYEPYSNIIVLLPCSSKKPYSISQSHQKFIKAIKSAKVVVEEVILTSPYGLVPRALERLVNYDIPVTGEWSFEEIELINNCLKNFLKKVKEKFDDYIVIAHLPEHYLEILELDDIVITSKGNPTSEEALKNLTDTLKKYKELTKSKDINKKGQRIHNIQQLAEFQFGINFIPNEIFINHKGQIFTKINNKNQQIASINPKNGLLILTLSGGELLWNSGGKDINYIEVNYEIKKGSLFPPGFVDCNENISYNDEVVLIKDDTFLGIGRALMSGFEMKKAKHGALVNIRNVKS</sequence>
<feature type="chain" id="PRO_0000107146" description="Archaeosine synthase">
    <location>
        <begin position="1"/>
        <end position="569"/>
    </location>
</feature>
<feature type="domain" description="PUA" evidence="1">
    <location>
        <begin position="495"/>
        <end position="569"/>
    </location>
</feature>
<organism>
    <name type="scientific">Methanocaldococcus jannaschii (strain ATCC 43067 / DSM 2661 / JAL-1 / JCM 10045 / NBRC 100440)</name>
    <name type="common">Methanococcus jannaschii</name>
    <dbReference type="NCBI Taxonomy" id="243232"/>
    <lineage>
        <taxon>Archaea</taxon>
        <taxon>Methanobacteriati</taxon>
        <taxon>Methanobacteriota</taxon>
        <taxon>Methanomada group</taxon>
        <taxon>Methanococci</taxon>
        <taxon>Methanococcales</taxon>
        <taxon>Methanocaldococcaceae</taxon>
        <taxon>Methanocaldococcus</taxon>
    </lineage>
</organism>
<protein>
    <recommendedName>
        <fullName evidence="3">Archaeosine synthase</fullName>
        <ecNumber evidence="2">2.6.1.97</ecNumber>
    </recommendedName>
    <alternativeName>
        <fullName evidence="3">Glutamine:preQ0-tRNA amidinotransferase</fullName>
    </alternativeName>
</protein>